<name>THS7B_HUMAN</name>
<organism>
    <name type="scientific">Homo sapiens</name>
    <name type="common">Human</name>
    <dbReference type="NCBI Taxonomy" id="9606"/>
    <lineage>
        <taxon>Eukaryota</taxon>
        <taxon>Metazoa</taxon>
        <taxon>Chordata</taxon>
        <taxon>Craniata</taxon>
        <taxon>Vertebrata</taxon>
        <taxon>Euteleostomi</taxon>
        <taxon>Mammalia</taxon>
        <taxon>Eutheria</taxon>
        <taxon>Euarchontoglires</taxon>
        <taxon>Primates</taxon>
        <taxon>Haplorrhini</taxon>
        <taxon>Catarrhini</taxon>
        <taxon>Hominidae</taxon>
        <taxon>Homo</taxon>
    </lineage>
</organism>
<dbReference type="EMBL" id="AC010100">
    <property type="status" value="NOT_ANNOTATED_CDS"/>
    <property type="molecule type" value="Genomic_DNA"/>
</dbReference>
<dbReference type="EMBL" id="AC010873">
    <property type="status" value="NOT_ANNOTATED_CDS"/>
    <property type="molecule type" value="Genomic_DNA"/>
</dbReference>
<dbReference type="EMBL" id="AC011231">
    <property type="status" value="NOT_ANNOTATED_CDS"/>
    <property type="molecule type" value="Genomic_DNA"/>
</dbReference>
<dbReference type="EMBL" id="AC012000">
    <property type="status" value="NOT_ANNOTATED_CDS"/>
    <property type="molecule type" value="Genomic_DNA"/>
</dbReference>
<dbReference type="EMBL" id="AC016679">
    <property type="status" value="NOT_ANNOTATED_CDS"/>
    <property type="molecule type" value="Genomic_DNA"/>
</dbReference>
<dbReference type="EMBL" id="AC017082">
    <property type="status" value="NOT_ANNOTATED_CDS"/>
    <property type="molecule type" value="Genomic_DNA"/>
</dbReference>
<dbReference type="EMBL" id="AC019067">
    <property type="status" value="NOT_ANNOTATED_CDS"/>
    <property type="molecule type" value="Genomic_DNA"/>
</dbReference>
<dbReference type="EMBL" id="KF456714">
    <property type="status" value="NOT_ANNOTATED_CDS"/>
    <property type="molecule type" value="Genomic_DNA"/>
</dbReference>
<dbReference type="EMBL" id="AB051466">
    <property type="protein sequence ID" value="BAB21770.1"/>
    <property type="molecule type" value="mRNA"/>
</dbReference>
<dbReference type="CCDS" id="CCDS82515.1"/>
<dbReference type="RefSeq" id="NP_001303278.1">
    <property type="nucleotide sequence ID" value="NM_001316349.2"/>
</dbReference>
<dbReference type="SMR" id="Q9C0I4"/>
<dbReference type="FunCoup" id="Q9C0I4">
    <property type="interactions" value="634"/>
</dbReference>
<dbReference type="IntAct" id="Q9C0I4">
    <property type="interactions" value="27"/>
</dbReference>
<dbReference type="STRING" id="9606.ENSP00000387145"/>
<dbReference type="GlyCosmos" id="Q9C0I4">
    <property type="glycosylation" value="11 sites, No reported glycans"/>
</dbReference>
<dbReference type="GlyGen" id="Q9C0I4">
    <property type="glycosylation" value="12 sites"/>
</dbReference>
<dbReference type="iPTMnet" id="Q9C0I4"/>
<dbReference type="PhosphoSitePlus" id="Q9C0I4"/>
<dbReference type="BioMuta" id="THSD7B"/>
<dbReference type="DMDM" id="118574152"/>
<dbReference type="MassIVE" id="Q9C0I4"/>
<dbReference type="PaxDb" id="9606-ENSP00000272643"/>
<dbReference type="PeptideAtlas" id="Q9C0I4"/>
<dbReference type="ProteomicsDB" id="16878"/>
<dbReference type="ProteomicsDB" id="80055"/>
<dbReference type="Antibodypedia" id="62318">
    <property type="antibodies" value="9 antibodies from 5 providers"/>
</dbReference>
<dbReference type="DNASU" id="80731"/>
<dbReference type="Ensembl" id="ENST00000409968.6">
    <property type="protein sequence ID" value="ENSP00000387145.1"/>
    <property type="gene ID" value="ENSG00000144229.13"/>
</dbReference>
<dbReference type="GeneID" id="80731"/>
<dbReference type="KEGG" id="hsa:80731"/>
<dbReference type="MANE-Select" id="ENST00000409968.6">
    <property type="protein sequence ID" value="ENSP00000387145.1"/>
    <property type="RefSeq nucleotide sequence ID" value="NM_001316349.2"/>
    <property type="RefSeq protein sequence ID" value="NP_001303278.1"/>
</dbReference>
<dbReference type="UCSC" id="uc061ocl.1">
    <property type="organism name" value="human"/>
</dbReference>
<dbReference type="AGR" id="HGNC:29348"/>
<dbReference type="CTD" id="80731"/>
<dbReference type="DisGeNET" id="80731"/>
<dbReference type="GeneCards" id="THSD7B"/>
<dbReference type="HGNC" id="HGNC:29348">
    <property type="gene designation" value="THSD7B"/>
</dbReference>
<dbReference type="HPA" id="ENSG00000144229">
    <property type="expression patterns" value="Tissue enriched (retina)"/>
</dbReference>
<dbReference type="MalaCards" id="THSD7B"/>
<dbReference type="neXtProt" id="NX_Q9C0I4"/>
<dbReference type="OpenTargets" id="ENSG00000144229"/>
<dbReference type="VEuPathDB" id="HostDB:ENSG00000144229"/>
<dbReference type="eggNOG" id="KOG3538">
    <property type="taxonomic scope" value="Eukaryota"/>
</dbReference>
<dbReference type="GeneTree" id="ENSGT00940000159262"/>
<dbReference type="HOGENOM" id="CLU_004819_0_0_1"/>
<dbReference type="InParanoid" id="Q9C0I4"/>
<dbReference type="OrthoDB" id="5814848at2759"/>
<dbReference type="PAN-GO" id="Q9C0I4">
    <property type="GO annotations" value="2 GO annotations based on evolutionary models"/>
</dbReference>
<dbReference type="PhylomeDB" id="Q9C0I4"/>
<dbReference type="TreeFam" id="TF329791"/>
<dbReference type="PathwayCommons" id="Q9C0I4"/>
<dbReference type="Reactome" id="R-HSA-5083635">
    <property type="pathway name" value="Defective B3GALTL causes PpS"/>
</dbReference>
<dbReference type="Reactome" id="R-HSA-5173214">
    <property type="pathway name" value="O-glycosylation of TSR domain-containing proteins"/>
</dbReference>
<dbReference type="SignaLink" id="Q9C0I4"/>
<dbReference type="BioGRID-ORCS" id="80731">
    <property type="hits" value="18 hits in 385 CRISPR screens"/>
</dbReference>
<dbReference type="ChiTaRS" id="THSD7B">
    <property type="organism name" value="human"/>
</dbReference>
<dbReference type="GenomeRNAi" id="80731"/>
<dbReference type="Pharos" id="Q9C0I4">
    <property type="development level" value="Tdark"/>
</dbReference>
<dbReference type="PRO" id="PR:Q9C0I4"/>
<dbReference type="Proteomes" id="UP000005640">
    <property type="component" value="Chromosome 2"/>
</dbReference>
<dbReference type="RNAct" id="Q9C0I4">
    <property type="molecule type" value="protein"/>
</dbReference>
<dbReference type="Bgee" id="ENSG00000144229">
    <property type="expression patterns" value="Expressed in male germ line stem cell (sensu Vertebrata) in testis and 112 other cell types or tissues"/>
</dbReference>
<dbReference type="ExpressionAtlas" id="Q9C0I4">
    <property type="expression patterns" value="baseline and differential"/>
</dbReference>
<dbReference type="GO" id="GO:0005886">
    <property type="term" value="C:plasma membrane"/>
    <property type="evidence" value="ECO:0000318"/>
    <property type="project" value="GO_Central"/>
</dbReference>
<dbReference type="GO" id="GO:0030036">
    <property type="term" value="P:actin cytoskeleton organization"/>
    <property type="evidence" value="ECO:0000318"/>
    <property type="project" value="GO_Central"/>
</dbReference>
<dbReference type="FunFam" id="2.20.100.10:FF:000014">
    <property type="entry name" value="Thrombospondin type 1 domain containing 7A"/>
    <property type="match status" value="1"/>
</dbReference>
<dbReference type="FunFam" id="2.20.100.10:FF:000017">
    <property type="entry name" value="Thrombospondin type 1 domain containing 7A"/>
    <property type="match status" value="1"/>
</dbReference>
<dbReference type="FunFam" id="2.20.100.10:FF:000018">
    <property type="entry name" value="Thrombospondin type 1 domain containing 7A"/>
    <property type="match status" value="1"/>
</dbReference>
<dbReference type="FunFam" id="2.20.100.10:FF:000019">
    <property type="entry name" value="Thrombospondin type 1 domain containing 7A"/>
    <property type="match status" value="1"/>
</dbReference>
<dbReference type="FunFam" id="2.20.100.10:FF:000020">
    <property type="entry name" value="Thrombospondin type 1 domain containing 7A"/>
    <property type="match status" value="1"/>
</dbReference>
<dbReference type="FunFam" id="2.20.100.10:FF:000027">
    <property type="entry name" value="Thrombospondin type 1 domain containing 7A"/>
    <property type="match status" value="1"/>
</dbReference>
<dbReference type="FunFam" id="2.20.100.10:FF:000031">
    <property type="entry name" value="Thrombospondin type 1 domain containing 7A"/>
    <property type="match status" value="1"/>
</dbReference>
<dbReference type="FunFam" id="2.20.100.10:FF:000050">
    <property type="entry name" value="Thrombospondin type 1 domain containing 7B"/>
    <property type="match status" value="1"/>
</dbReference>
<dbReference type="FunFam" id="2.20.100.10:FF:000062">
    <property type="entry name" value="Thrombospondin type 1 domain containing 7B"/>
    <property type="match status" value="1"/>
</dbReference>
<dbReference type="FunFam" id="2.20.100.10:FF:000063">
    <property type="entry name" value="Thrombospondin type 1 domain containing 7B"/>
    <property type="match status" value="1"/>
</dbReference>
<dbReference type="Gene3D" id="2.20.100.10">
    <property type="entry name" value="Thrombospondin type-1 (TSP1) repeat"/>
    <property type="match status" value="10"/>
</dbReference>
<dbReference type="InterPro" id="IPR051418">
    <property type="entry name" value="Spondin/Thrombospondin_T1"/>
</dbReference>
<dbReference type="InterPro" id="IPR000884">
    <property type="entry name" value="TSP1_rpt"/>
</dbReference>
<dbReference type="InterPro" id="IPR036383">
    <property type="entry name" value="TSP1_rpt_sf"/>
</dbReference>
<dbReference type="InterPro" id="IPR044004">
    <property type="entry name" value="TSP1_spondin_dom"/>
</dbReference>
<dbReference type="InterPro" id="IPR056991">
    <property type="entry name" value="TSP1_TSH7A-B_C"/>
</dbReference>
<dbReference type="PANTHER" id="PTHR11311">
    <property type="entry name" value="SPONDIN"/>
    <property type="match status" value="1"/>
</dbReference>
<dbReference type="PANTHER" id="PTHR11311:SF15">
    <property type="entry name" value="SPONDIN-2"/>
    <property type="match status" value="1"/>
</dbReference>
<dbReference type="Pfam" id="PF19030">
    <property type="entry name" value="TSP1_ADAMTS"/>
    <property type="match status" value="3"/>
</dbReference>
<dbReference type="Pfam" id="PF19028">
    <property type="entry name" value="TSP1_spondin"/>
    <property type="match status" value="7"/>
</dbReference>
<dbReference type="Pfam" id="PF23308">
    <property type="entry name" value="TSP1_TSH7A-B_C"/>
    <property type="match status" value="1"/>
</dbReference>
<dbReference type="Pfam" id="PF00090">
    <property type="entry name" value="TSP_1"/>
    <property type="match status" value="1"/>
</dbReference>
<dbReference type="SMART" id="SM00209">
    <property type="entry name" value="TSP1"/>
    <property type="match status" value="16"/>
</dbReference>
<dbReference type="SUPFAM" id="SSF82895">
    <property type="entry name" value="TSP-1 type 1 repeat"/>
    <property type="match status" value="12"/>
</dbReference>
<dbReference type="PROSITE" id="PS50092">
    <property type="entry name" value="TSP1"/>
    <property type="match status" value="13"/>
</dbReference>
<feature type="signal peptide" evidence="1">
    <location>
        <begin position="1"/>
        <end position="31"/>
    </location>
</feature>
<feature type="chain" id="PRO_0000260251" description="Thrombospondin type-1 domain-containing protein 7B">
    <location>
        <begin position="32"/>
        <end position="1606"/>
    </location>
</feature>
<feature type="topological domain" description="Extracellular" evidence="1">
    <location>
        <begin position="32"/>
        <end position="1555"/>
    </location>
</feature>
<feature type="transmembrane region" description="Helical" evidence="1">
    <location>
        <begin position="1556"/>
        <end position="1576"/>
    </location>
</feature>
<feature type="topological domain" description="Cytoplasmic" evidence="1">
    <location>
        <begin position="1577"/>
        <end position="1606"/>
    </location>
</feature>
<feature type="domain" description="TSP type-1 1" evidence="2">
    <location>
        <begin position="40"/>
        <end position="98"/>
    </location>
</feature>
<feature type="domain" description="TSP type-1 2" evidence="2">
    <location>
        <begin position="102"/>
        <end position="177"/>
    </location>
</feature>
<feature type="domain" description="TSP type-1 3" evidence="2">
    <location>
        <begin position="179"/>
        <end position="233"/>
    </location>
</feature>
<feature type="domain" description="TSP type-1 4" evidence="2">
    <location>
        <begin position="336"/>
        <end position="392"/>
    </location>
</feature>
<feature type="domain" description="TSP type-1 5" evidence="2">
    <location>
        <begin position="399"/>
        <end position="482"/>
    </location>
</feature>
<feature type="domain" description="TSP type-1 6" evidence="2">
    <location>
        <begin position="484"/>
        <end position="543"/>
    </location>
</feature>
<feature type="domain" description="TSP type-1 7" evidence="2">
    <location>
        <begin position="601"/>
        <end position="661"/>
    </location>
</feature>
<feature type="domain" description="TSP type-1 8" evidence="2">
    <location>
        <begin position="662"/>
        <end position="735"/>
    </location>
</feature>
<feature type="domain" description="TSP type-1 9" evidence="2">
    <location>
        <begin position="737"/>
        <end position="796"/>
    </location>
</feature>
<feature type="domain" description="TSP type-1 10" evidence="2">
    <location>
        <begin position="797"/>
        <end position="869"/>
    </location>
</feature>
<feature type="domain" description="TSP type-1 11" evidence="2">
    <location>
        <begin position="871"/>
        <end position="924"/>
    </location>
</feature>
<feature type="domain" description="TSP type-1 12" evidence="2">
    <location>
        <begin position="925"/>
        <end position="998"/>
    </location>
</feature>
<feature type="domain" description="TSP type-1 13" evidence="2">
    <location>
        <begin position="1000"/>
        <end position="1125"/>
    </location>
</feature>
<feature type="domain" description="TSP type-1 14" evidence="2">
    <location>
        <begin position="1127"/>
        <end position="1181"/>
    </location>
</feature>
<feature type="domain" description="TSP type-1 15" evidence="2">
    <location>
        <begin position="1182"/>
        <end position="1245"/>
    </location>
</feature>
<feature type="domain" description="TSP type-1 16" evidence="2">
    <location>
        <begin position="1247"/>
        <end position="1302"/>
    </location>
</feature>
<feature type="domain" description="TSP type-1 17" evidence="2">
    <location>
        <begin position="1303"/>
        <end position="1368"/>
    </location>
</feature>
<feature type="domain" description="TSP type-1 18" evidence="2">
    <location>
        <begin position="1370"/>
        <end position="1431"/>
    </location>
</feature>
<feature type="region of interest" description="Disordered" evidence="3">
    <location>
        <begin position="1583"/>
        <end position="1606"/>
    </location>
</feature>
<feature type="compositionally biased region" description="Polar residues" evidence="3">
    <location>
        <begin position="1586"/>
        <end position="1595"/>
    </location>
</feature>
<feature type="glycosylation site" description="N-linked (GlcNAc...) asparagine" evidence="1">
    <location>
        <position position="150"/>
    </location>
</feature>
<feature type="glycosylation site" description="N-linked (GlcNAc...) asparagine" evidence="1">
    <location>
        <position position="190"/>
    </location>
</feature>
<feature type="glycosylation site" description="N-linked (GlcNAc...) asparagine" evidence="1">
    <location>
        <position position="219"/>
    </location>
</feature>
<feature type="glycosylation site" description="N-linked (GlcNAc...) asparagine" evidence="1">
    <location>
        <position position="683"/>
    </location>
</feature>
<feature type="glycosylation site" description="N-linked (GlcNAc...) asparagine" evidence="1">
    <location>
        <position position="757"/>
    </location>
</feature>
<feature type="glycosylation site" description="N-linked (GlcNAc...) asparagine" evidence="1">
    <location>
        <position position="842"/>
    </location>
</feature>
<feature type="glycosylation site" description="N-linked (GlcNAc...) asparagine" evidence="1">
    <location>
        <position position="933"/>
    </location>
</feature>
<feature type="glycosylation site" description="N-linked (GlcNAc...) asparagine" evidence="1">
    <location>
        <position position="1186"/>
    </location>
</feature>
<feature type="glycosylation site" description="N-linked (GlcNAc...) asparagine" evidence="1">
    <location>
        <position position="1308"/>
    </location>
</feature>
<feature type="glycosylation site" description="N-linked (GlcNAc...) asparagine" evidence="1">
    <location>
        <position position="1456"/>
    </location>
</feature>
<feature type="glycosylation site" description="N-linked (GlcNAc...) asparagine" evidence="1">
    <location>
        <position position="1524"/>
    </location>
</feature>
<feature type="disulfide bond" evidence="2">
    <location>
        <begin position="411"/>
        <end position="477"/>
    </location>
</feature>
<feature type="disulfide bond" evidence="2">
    <location>
        <begin position="431"/>
        <end position="481"/>
    </location>
</feature>
<feature type="disulfide bond" evidence="2">
    <location>
        <begin position="442"/>
        <end position="466"/>
    </location>
</feature>
<feature type="disulfide bond" evidence="2">
    <location>
        <begin position="602"/>
        <end position="643"/>
    </location>
</feature>
<feature type="disulfide bond" evidence="2">
    <location>
        <begin position="613"/>
        <end position="617"/>
    </location>
</feature>
<feature type="disulfide bond" evidence="2">
    <location>
        <begin position="655"/>
        <end position="660"/>
    </location>
</feature>
<feature type="disulfide bond" evidence="2">
    <location>
        <begin position="738"/>
        <end position="779"/>
    </location>
</feature>
<feature type="disulfide bond" evidence="2">
    <location>
        <begin position="749"/>
        <end position="753"/>
    </location>
</feature>
<feature type="disulfide bond" evidence="2">
    <location>
        <begin position="789"/>
        <end position="795"/>
    </location>
</feature>
<feature type="disulfide bond" evidence="2">
    <location>
        <begin position="872"/>
        <end position="907"/>
    </location>
</feature>
<feature type="disulfide bond" evidence="2">
    <location>
        <begin position="883"/>
        <end position="887"/>
    </location>
</feature>
<feature type="disulfide bond" evidence="2">
    <location>
        <begin position="921"/>
        <end position="923"/>
    </location>
</feature>
<feature type="disulfide bond" evidence="2">
    <location>
        <begin position="937"/>
        <end position="993"/>
    </location>
</feature>
<feature type="disulfide bond" evidence="2">
    <location>
        <begin position="959"/>
        <end position="997"/>
    </location>
</feature>
<feature type="disulfide bond" evidence="2">
    <location>
        <begin position="970"/>
        <end position="983"/>
    </location>
</feature>
<feature type="disulfide bond" evidence="2">
    <location>
        <begin position="1001"/>
        <end position="1038"/>
    </location>
</feature>
<feature type="disulfide bond" evidence="2">
    <location>
        <begin position="1012"/>
        <end position="1016"/>
    </location>
</feature>
<feature type="disulfide bond" evidence="2">
    <location>
        <begin position="1120"/>
        <end position="1124"/>
    </location>
</feature>
<feature type="disulfide bond" evidence="2">
    <location>
        <begin position="1248"/>
        <end position="1286"/>
    </location>
</feature>
<feature type="disulfide bond" evidence="2">
    <location>
        <begin position="1259"/>
        <end position="1263"/>
    </location>
</feature>
<feature type="disulfide bond" evidence="2">
    <location>
        <begin position="1296"/>
        <end position="1301"/>
    </location>
</feature>
<feature type="disulfide bond" evidence="2">
    <location>
        <begin position="1371"/>
        <end position="1415"/>
    </location>
</feature>
<feature type="disulfide bond" evidence="2">
    <location>
        <begin position="1382"/>
        <end position="1386"/>
    </location>
</feature>
<feature type="disulfide bond" evidence="2">
    <location>
        <begin position="1425"/>
        <end position="1430"/>
    </location>
</feature>
<feature type="sequence conflict" description="In Ref. 2; BAB21770." evidence="4" ref="2">
    <original>D</original>
    <variation>E</variation>
    <location>
        <position position="503"/>
    </location>
</feature>
<feature type="sequence conflict" description="In Ref. 2; BAB21770." evidence="4" ref="2">
    <original>Q</original>
    <variation>QAQ</variation>
    <location>
        <position position="1046"/>
    </location>
</feature>
<feature type="sequence conflict" description="In Ref. 2; BAB21770." evidence="4" ref="2">
    <original>K</original>
    <variation>R</variation>
    <location>
        <position position="1501"/>
    </location>
</feature>
<protein>
    <recommendedName>
        <fullName evidence="4">Thrombospondin type-1 domain-containing protein 7B</fullName>
    </recommendedName>
</protein>
<comment type="interaction">
    <interactant intactId="EBI-311394">
        <id>Q9C0I4</id>
    </interactant>
    <interactant intactId="EBI-13059134">
        <id>Q13520</id>
        <label>AQP6</label>
    </interactant>
    <organismsDiffer>false</organismsDiffer>
    <experiments>3</experiments>
</comment>
<comment type="interaction">
    <interactant intactId="EBI-311394">
        <id>Q9C0I4</id>
    </interactant>
    <interactant intactId="EBI-11343438">
        <id>Q3SXY8</id>
        <label>ARL13B</label>
    </interactant>
    <organismsDiffer>false</organismsDiffer>
    <experiments>3</experiments>
</comment>
<comment type="interaction">
    <interactant intactId="EBI-311394">
        <id>Q9C0I4</id>
    </interactant>
    <interactant intactId="EBI-1045797">
        <id>Q8N5K1</id>
        <label>CISD2</label>
    </interactant>
    <organismsDiffer>false</organismsDiffer>
    <experiments>3</experiments>
</comment>
<comment type="interaction">
    <interactant intactId="EBI-311394">
        <id>Q9C0I4</id>
    </interactant>
    <interactant intactId="EBI-3917045">
        <id>Q6PI48</id>
        <label>DARS2</label>
    </interactant>
    <organismsDiffer>false</organismsDiffer>
    <experiments>3</experiments>
</comment>
<comment type="interaction">
    <interactant intactId="EBI-311394">
        <id>Q9C0I4</id>
    </interactant>
    <interactant intactId="EBI-18304435">
        <id>Q5JX71</id>
        <label>FAM209A</label>
    </interactant>
    <organismsDiffer>false</organismsDiffer>
    <experiments>3</experiments>
</comment>
<comment type="interaction">
    <interactant intactId="EBI-311394">
        <id>Q9C0I4</id>
    </interactant>
    <interactant intactId="EBI-3918971">
        <id>Q9Y680</id>
        <label>FKBP7</label>
    </interactant>
    <organismsDiffer>false</organismsDiffer>
    <experiments>3</experiments>
</comment>
<comment type="interaction">
    <interactant intactId="EBI-311394">
        <id>Q9C0I4</id>
    </interactant>
    <interactant intactId="EBI-17458373">
        <id>P48165</id>
        <label>GJA8</label>
    </interactant>
    <organismsDiffer>false</organismsDiffer>
    <experiments>3</experiments>
</comment>
<comment type="interaction">
    <interactant intactId="EBI-311394">
        <id>Q9C0I4</id>
    </interactant>
    <interactant intactId="EBI-17935713">
        <id>Q96P66</id>
        <label>GPR101</label>
    </interactant>
    <organismsDiffer>false</organismsDiffer>
    <experiments>3</experiments>
</comment>
<comment type="interaction">
    <interactant intactId="EBI-311394">
        <id>Q9C0I4</id>
    </interactant>
    <interactant intactId="EBI-13345167">
        <id>Q8TDT2</id>
        <label>GPR152</label>
    </interactant>
    <organismsDiffer>false</organismsDiffer>
    <experiments>3</experiments>
</comment>
<comment type="interaction">
    <interactant intactId="EBI-311394">
        <id>Q9C0I4</id>
    </interactant>
    <interactant intactId="EBI-2927498">
        <id>O60883</id>
        <label>GPR37L1</label>
    </interactant>
    <organismsDiffer>false</organismsDiffer>
    <experiments>3</experiments>
</comment>
<comment type="interaction">
    <interactant intactId="EBI-311394">
        <id>Q9C0I4</id>
    </interactant>
    <interactant intactId="EBI-12017638">
        <id>P48051</id>
        <label>KCNJ6</label>
    </interactant>
    <organismsDiffer>false</organismsDiffer>
    <experiments>3</experiments>
</comment>
<comment type="interaction">
    <interactant intactId="EBI-311394">
        <id>Q9C0I4</id>
    </interactant>
    <interactant intactId="EBI-3910993">
        <id>P43629</id>
        <label>KIR3DL1</label>
    </interactant>
    <organismsDiffer>false</organismsDiffer>
    <experiments>3</experiments>
</comment>
<comment type="interaction">
    <interactant intactId="EBI-311394">
        <id>Q9C0I4</id>
    </interactant>
    <interactant intactId="EBI-10329546">
        <id>Q9Y5Y7</id>
        <label>LYVE1</label>
    </interactant>
    <organismsDiffer>false</organismsDiffer>
    <experiments>3</experiments>
</comment>
<comment type="interaction">
    <interactant intactId="EBI-311394">
        <id>Q9C0I4</id>
    </interactant>
    <interactant intactId="EBI-373355">
        <id>Q5SR56</id>
        <label>MFSD14B</label>
    </interactant>
    <organismsDiffer>false</organismsDiffer>
    <experiments>3</experiments>
</comment>
<comment type="interaction">
    <interactant intactId="EBI-311394">
        <id>Q9C0I4</id>
    </interactant>
    <interactant intactId="EBI-3923617">
        <id>Q9H2K0</id>
        <label>MTIF3</label>
    </interactant>
    <organismsDiffer>false</organismsDiffer>
    <experiments>3</experiments>
</comment>
<comment type="interaction">
    <interactant intactId="EBI-311394">
        <id>Q9C0I4</id>
    </interactant>
    <interactant intactId="EBI-594836">
        <id>O00623</id>
        <label>PEX12</label>
    </interactant>
    <organismsDiffer>false</organismsDiffer>
    <experiments>3</experiments>
</comment>
<comment type="interaction">
    <interactant intactId="EBI-311394">
        <id>Q9C0I4</id>
    </interactant>
    <interactant intactId="EBI-17630288">
        <id>P57054</id>
        <label>PIGP</label>
    </interactant>
    <organismsDiffer>false</organismsDiffer>
    <experiments>3</experiments>
</comment>
<comment type="interaction">
    <interactant intactId="EBI-311394">
        <id>Q9C0I4</id>
    </interactant>
    <interactant intactId="EBI-949945">
        <id>Q53GL0</id>
        <label>PLEKHO1</label>
    </interactant>
    <organismsDiffer>false</organismsDiffer>
    <experiments>3</experiments>
</comment>
<comment type="interaction">
    <interactant intactId="EBI-311394">
        <id>Q9C0I4</id>
    </interactant>
    <interactant intactId="EBI-19141793">
        <id>Q13336-2</id>
        <label>SLC14A1</label>
    </interactant>
    <organismsDiffer>false</organismsDiffer>
    <experiments>3</experiments>
</comment>
<comment type="interaction">
    <interactant intactId="EBI-311394">
        <id>Q9C0I4</id>
    </interactant>
    <interactant intactId="EBI-10262251">
        <id>Q8IWU4</id>
        <label>SLC30A8</label>
    </interactant>
    <organismsDiffer>false</organismsDiffer>
    <experiments>3</experiments>
</comment>
<comment type="interaction">
    <interactant intactId="EBI-311394">
        <id>Q9C0I4</id>
    </interactant>
    <interactant intactId="EBI-17498703">
        <id>Q9HBV2</id>
        <label>SPACA1</label>
    </interactant>
    <organismsDiffer>false</organismsDiffer>
    <experiments>3</experiments>
</comment>
<comment type="interaction">
    <interactant intactId="EBI-311394">
        <id>Q9C0I4</id>
    </interactant>
    <interactant intactId="EBI-1211440">
        <id>P27105</id>
        <label>STOM</label>
    </interactant>
    <organismsDiffer>false</organismsDiffer>
    <experiments>3</experiments>
</comment>
<comment type="interaction">
    <interactant intactId="EBI-311394">
        <id>Q9C0I4</id>
    </interactant>
    <interactant intactId="EBI-8032987">
        <id>Q8N9I0</id>
        <label>SYT2</label>
    </interactant>
    <organismsDiffer>false</organismsDiffer>
    <experiments>3</experiments>
</comment>
<comment type="interaction">
    <interactant intactId="EBI-311394">
        <id>Q9C0I4</id>
    </interactant>
    <interactant intactId="EBI-6447886">
        <id>Q9Y320</id>
        <label>TMX2</label>
    </interactant>
    <organismsDiffer>false</organismsDiffer>
    <experiments>3</experiments>
</comment>
<comment type="subcellular location">
    <subcellularLocation>
        <location evidence="4">Membrane</location>
        <topology evidence="4">Single-pass type I membrane protein</topology>
    </subcellularLocation>
</comment>
<gene>
    <name evidence="5" type="primary">THSD7B</name>
    <name type="synonym">KIAA1679</name>
</gene>
<accession>Q9C0I4</accession>
<accession>E7EM75</accession>
<keyword id="KW-0175">Coiled coil</keyword>
<keyword id="KW-1015">Disulfide bond</keyword>
<keyword id="KW-0325">Glycoprotein</keyword>
<keyword id="KW-0472">Membrane</keyword>
<keyword id="KW-1267">Proteomics identification</keyword>
<keyword id="KW-1185">Reference proteome</keyword>
<keyword id="KW-0677">Repeat</keyword>
<keyword id="KW-0732">Signal</keyword>
<keyword id="KW-0812">Transmembrane</keyword>
<keyword id="KW-1133">Transmembrane helix</keyword>
<reference key="1">
    <citation type="journal article" date="2005" name="Nature">
        <title>Generation and annotation of the DNA sequences of human chromosomes 2 and 4.</title>
        <authorList>
            <person name="Hillier L.W."/>
            <person name="Graves T.A."/>
            <person name="Fulton R.S."/>
            <person name="Fulton L.A."/>
            <person name="Pepin K.H."/>
            <person name="Minx P."/>
            <person name="Wagner-McPherson C."/>
            <person name="Layman D."/>
            <person name="Wylie K."/>
            <person name="Sekhon M."/>
            <person name="Becker M.C."/>
            <person name="Fewell G.A."/>
            <person name="Delehaunty K.D."/>
            <person name="Miner T.L."/>
            <person name="Nash W.E."/>
            <person name="Kremitzki C."/>
            <person name="Oddy L."/>
            <person name="Du H."/>
            <person name="Sun H."/>
            <person name="Bradshaw-Cordum H."/>
            <person name="Ali J."/>
            <person name="Carter J."/>
            <person name="Cordes M."/>
            <person name="Harris A."/>
            <person name="Isak A."/>
            <person name="van Brunt A."/>
            <person name="Nguyen C."/>
            <person name="Du F."/>
            <person name="Courtney L."/>
            <person name="Kalicki J."/>
            <person name="Ozersky P."/>
            <person name="Abbott S."/>
            <person name="Armstrong J."/>
            <person name="Belter E.A."/>
            <person name="Caruso L."/>
            <person name="Cedroni M."/>
            <person name="Cotton M."/>
            <person name="Davidson T."/>
            <person name="Desai A."/>
            <person name="Elliott G."/>
            <person name="Erb T."/>
            <person name="Fronick C."/>
            <person name="Gaige T."/>
            <person name="Haakenson W."/>
            <person name="Haglund K."/>
            <person name="Holmes A."/>
            <person name="Harkins R."/>
            <person name="Kim K."/>
            <person name="Kruchowski S.S."/>
            <person name="Strong C.M."/>
            <person name="Grewal N."/>
            <person name="Goyea E."/>
            <person name="Hou S."/>
            <person name="Levy A."/>
            <person name="Martinka S."/>
            <person name="Mead K."/>
            <person name="McLellan M.D."/>
            <person name="Meyer R."/>
            <person name="Randall-Maher J."/>
            <person name="Tomlinson C."/>
            <person name="Dauphin-Kohlberg S."/>
            <person name="Kozlowicz-Reilly A."/>
            <person name="Shah N."/>
            <person name="Swearengen-Shahid S."/>
            <person name="Snider J."/>
            <person name="Strong J.T."/>
            <person name="Thompson J."/>
            <person name="Yoakum M."/>
            <person name="Leonard S."/>
            <person name="Pearman C."/>
            <person name="Trani L."/>
            <person name="Radionenko M."/>
            <person name="Waligorski J.E."/>
            <person name="Wang C."/>
            <person name="Rock S.M."/>
            <person name="Tin-Wollam A.-M."/>
            <person name="Maupin R."/>
            <person name="Latreille P."/>
            <person name="Wendl M.C."/>
            <person name="Yang S.-P."/>
            <person name="Pohl C."/>
            <person name="Wallis J.W."/>
            <person name="Spieth J."/>
            <person name="Bieri T.A."/>
            <person name="Berkowicz N."/>
            <person name="Nelson J.O."/>
            <person name="Osborne J."/>
            <person name="Ding L."/>
            <person name="Meyer R."/>
            <person name="Sabo A."/>
            <person name="Shotland Y."/>
            <person name="Sinha P."/>
            <person name="Wohldmann P.E."/>
            <person name="Cook L.L."/>
            <person name="Hickenbotham M.T."/>
            <person name="Eldred J."/>
            <person name="Williams D."/>
            <person name="Jones T.A."/>
            <person name="She X."/>
            <person name="Ciccarelli F.D."/>
            <person name="Izaurralde E."/>
            <person name="Taylor J."/>
            <person name="Schmutz J."/>
            <person name="Myers R.M."/>
            <person name="Cox D.R."/>
            <person name="Huang X."/>
            <person name="McPherson J.D."/>
            <person name="Mardis E.R."/>
            <person name="Clifton S.W."/>
            <person name="Warren W.C."/>
            <person name="Chinwalla A.T."/>
            <person name="Eddy S.R."/>
            <person name="Marra M.A."/>
            <person name="Ovcharenko I."/>
            <person name="Furey T.S."/>
            <person name="Miller W."/>
            <person name="Eichler E.E."/>
            <person name="Bork P."/>
            <person name="Suyama M."/>
            <person name="Torrents D."/>
            <person name="Waterston R.H."/>
            <person name="Wilson R.K."/>
        </authorList>
    </citation>
    <scope>NUCLEOTIDE SEQUENCE [LARGE SCALE GENOMIC DNA]</scope>
</reference>
<reference key="2">
    <citation type="journal article" date="2000" name="DNA Res.">
        <title>Prediction of the coding sequences of unidentified human genes. XIX. The complete sequences of 100 new cDNA clones from brain which code for large proteins in vitro.</title>
        <authorList>
            <person name="Nagase T."/>
            <person name="Kikuno R."/>
            <person name="Hattori A."/>
            <person name="Kondo Y."/>
            <person name="Okumura K."/>
            <person name="Ohara O."/>
        </authorList>
    </citation>
    <scope>NUCLEOTIDE SEQUENCE [LARGE SCALE MRNA] OF 73-1606</scope>
    <source>
        <tissue>Brain</tissue>
    </source>
</reference>
<sequence>MFPKSNLTVTCWVWRSMRKLFLLLSLLLSHAAHLEGKKDNQFIWKPGPWGRCTGDCGPGGVQSRAVWCFHVDGWTSHLSNCGESNRPPKERSCFRVCDWHSDLFQWEVSDWHHCVLVPYARGEVKPRTAECVTAQHGLQHRMVRCIQKLNRTVVANEICEHFALQPPTEQACLIPCPRDCVVSEFLPWSNCSKGCGKKLQHRTRAVIAPPLFGGLQCPNLTESRACDAPISCPLGEEEYTFSLKVGPWSKCRLPHLKEINPSGRTVLDFNSDSNERVTFKHQSYKAHHHSKSWAIEIGYQTRQVSCTRSDGQNAMLSLCLQDSFPLTVQSCIMPKDCETSQWSSWSPCSKTCRSGSLLPGFRSRSRNVKHMAIGGGKECPELLEKEACIVEGELLQQCPRYSWRTSEWKECQVSLLLEQQDPHWHVTGPVCGGGIQTREVYCAQSVPAAAALRAKEVSRPVEKALCVGPAPLPSQLCNIPCSTDCIVSSWSAWGLCIHENCHDPQGKKGFRTRQRHVLMESTGPAGHCPHLVESVPCEDPMCYRWLASEGICFPDHGKCGLGHRILKAVCQNDRGEDVSGSLCPVPPPPERKSCEIPCRMDCVLSEWTEWSSCSQSCSNKNSDGKQTRSRTILALAGEGGKPCPPSQALQEHRLCNDHSCMQLHWETSPWGPCSEDTLVTALNATIGWNGEATCGVGIQTRRVFCVKSHVGQVMTKRCPDSTRPETVRPCFLPCKKDCIVTAFSEWTPCPRMCQAGNATVKQSRYRIIIQEAANGGQECPDTLYEERECEDVSLCPVYRWKPQKWSPCILVPESVWQGITGSSEACGKGLQTRAVSCISDDNRSAEMMECLKQTNGMPLLVQECTVPCREDCTFTAWSKFTPCSTNCEATKSRRRQLTGKSRKKEKCQDSDLYPLVETELCPCDEFISQPYGNWSDCILPEGRREPHRGLRVQADSKECGEGLRFRAVACSDKNGRPVDPSFCSSSGYIQEKCVIPCPFDCKLSDWSSWGSCSSSCGIGVRIRSKWLKEKPYNGGRPCPKLDLKNQVHEAVPCYSECNQYSWVVEHWSSCKINNELRSLRCGGGTQSRKIRCVNTADGEGGAVDSNLCNQDEIPPETQSCSLMCPNECVMSEWGLWSKCPQSCDPHTMQRRTRHLLRPSLNSRTCAEDSQVQPCLLNENCFQFQYNLTEWSTCQLSENAPCGQGVRTRLLSCVCSDGKPVSMDQCEQHNLEKPQRMSIPCLVECVVNCQLSGWTAWTECSQTCGHGGRMSRTRFIIMPTQGEGRPCPTELTQEKTCPVTPCYSWVLGNWSACKLEGGDCGEGVQIRSLSCMVHSGSISHAAGRVEDALCGEMPFQDSILKQLCSVPCPGDCHLTEWSEWSTCELTCIDGRSFETVGRQSRSRTFIIQSFENQDSCPQQVLETRPCTGGKCYHYTWKASLWNNNERTVWCQRSDGVNVTGGCSPQARPAAIRQCIPACRKPFSYCTQGGVCGCEKGYTEIMKSNGFLDYCMKVPGSEDKKADVKNLSGKNRPVNSKIHDIFKGWSLQPLDPDGRVKIWVYGVSGGAFLIMIFLIFTSYLVCKKPKPHQSTPPQQKPLTLAYDGDLDM</sequence>
<evidence type="ECO:0000255" key="1"/>
<evidence type="ECO:0000255" key="2">
    <source>
        <dbReference type="PROSITE-ProRule" id="PRU00210"/>
    </source>
</evidence>
<evidence type="ECO:0000256" key="3">
    <source>
        <dbReference type="SAM" id="MobiDB-lite"/>
    </source>
</evidence>
<evidence type="ECO:0000305" key="4"/>
<evidence type="ECO:0000312" key="5">
    <source>
        <dbReference type="HGNC" id="HGNC:29348"/>
    </source>
</evidence>
<proteinExistence type="evidence at protein level"/>